<keyword id="KW-0687">Ribonucleoprotein</keyword>
<keyword id="KW-0689">Ribosomal protein</keyword>
<keyword id="KW-0694">RNA-binding</keyword>
<keyword id="KW-0699">rRNA-binding</keyword>
<sequence length="117" mass="12835">MEAKAVARTIRIAPRKVRLVLDLIRGKNAAEAIAILKLTNKASSPVIEKVLMSALANAEHNYDMNTDELVVKEAYANEGPTLKRFRPRAQGRASAINKRTSHITIVVSDGKEEAKEA</sequence>
<protein>
    <recommendedName>
        <fullName evidence="1">Large ribosomal subunit protein uL22</fullName>
    </recommendedName>
    <alternativeName>
        <fullName evidence="2">50S ribosomal protein L22</fullName>
    </alternativeName>
</protein>
<evidence type="ECO:0000255" key="1">
    <source>
        <dbReference type="HAMAP-Rule" id="MF_01331"/>
    </source>
</evidence>
<evidence type="ECO:0000305" key="2"/>
<dbReference type="EMBL" id="BX571856">
    <property type="protein sequence ID" value="CAG41311.1"/>
    <property type="molecule type" value="Genomic_DNA"/>
</dbReference>
<dbReference type="RefSeq" id="WP_000387527.1">
    <property type="nucleotide sequence ID" value="NC_002952.2"/>
</dbReference>
<dbReference type="SMR" id="Q6GEI8"/>
<dbReference type="GeneID" id="98346557"/>
<dbReference type="KEGG" id="sar:SAR2330"/>
<dbReference type="HOGENOM" id="CLU_083987_3_3_9"/>
<dbReference type="Proteomes" id="UP000000596">
    <property type="component" value="Chromosome"/>
</dbReference>
<dbReference type="GO" id="GO:0022625">
    <property type="term" value="C:cytosolic large ribosomal subunit"/>
    <property type="evidence" value="ECO:0007669"/>
    <property type="project" value="TreeGrafter"/>
</dbReference>
<dbReference type="GO" id="GO:0019843">
    <property type="term" value="F:rRNA binding"/>
    <property type="evidence" value="ECO:0007669"/>
    <property type="project" value="UniProtKB-UniRule"/>
</dbReference>
<dbReference type="GO" id="GO:0003735">
    <property type="term" value="F:structural constituent of ribosome"/>
    <property type="evidence" value="ECO:0007669"/>
    <property type="project" value="InterPro"/>
</dbReference>
<dbReference type="GO" id="GO:0006412">
    <property type="term" value="P:translation"/>
    <property type="evidence" value="ECO:0007669"/>
    <property type="project" value="UniProtKB-UniRule"/>
</dbReference>
<dbReference type="CDD" id="cd00336">
    <property type="entry name" value="Ribosomal_L22"/>
    <property type="match status" value="1"/>
</dbReference>
<dbReference type="FunFam" id="3.90.470.10:FF:000001">
    <property type="entry name" value="50S ribosomal protein L22"/>
    <property type="match status" value="1"/>
</dbReference>
<dbReference type="Gene3D" id="3.90.470.10">
    <property type="entry name" value="Ribosomal protein L22/L17"/>
    <property type="match status" value="1"/>
</dbReference>
<dbReference type="HAMAP" id="MF_01331_B">
    <property type="entry name" value="Ribosomal_uL22_B"/>
    <property type="match status" value="1"/>
</dbReference>
<dbReference type="InterPro" id="IPR001063">
    <property type="entry name" value="Ribosomal_uL22"/>
</dbReference>
<dbReference type="InterPro" id="IPR005727">
    <property type="entry name" value="Ribosomal_uL22_bac/chlpt-type"/>
</dbReference>
<dbReference type="InterPro" id="IPR047867">
    <property type="entry name" value="Ribosomal_uL22_bac/org-type"/>
</dbReference>
<dbReference type="InterPro" id="IPR018260">
    <property type="entry name" value="Ribosomal_uL22_CS"/>
</dbReference>
<dbReference type="InterPro" id="IPR036394">
    <property type="entry name" value="Ribosomal_uL22_sf"/>
</dbReference>
<dbReference type="NCBIfam" id="TIGR01044">
    <property type="entry name" value="rplV_bact"/>
    <property type="match status" value="1"/>
</dbReference>
<dbReference type="PANTHER" id="PTHR13501">
    <property type="entry name" value="CHLOROPLAST 50S RIBOSOMAL PROTEIN L22-RELATED"/>
    <property type="match status" value="1"/>
</dbReference>
<dbReference type="PANTHER" id="PTHR13501:SF8">
    <property type="entry name" value="LARGE RIBOSOMAL SUBUNIT PROTEIN UL22M"/>
    <property type="match status" value="1"/>
</dbReference>
<dbReference type="Pfam" id="PF00237">
    <property type="entry name" value="Ribosomal_L22"/>
    <property type="match status" value="1"/>
</dbReference>
<dbReference type="SUPFAM" id="SSF54843">
    <property type="entry name" value="Ribosomal protein L22"/>
    <property type="match status" value="1"/>
</dbReference>
<dbReference type="PROSITE" id="PS00464">
    <property type="entry name" value="RIBOSOMAL_L22"/>
    <property type="match status" value="1"/>
</dbReference>
<organism>
    <name type="scientific">Staphylococcus aureus (strain MRSA252)</name>
    <dbReference type="NCBI Taxonomy" id="282458"/>
    <lineage>
        <taxon>Bacteria</taxon>
        <taxon>Bacillati</taxon>
        <taxon>Bacillota</taxon>
        <taxon>Bacilli</taxon>
        <taxon>Bacillales</taxon>
        <taxon>Staphylococcaceae</taxon>
        <taxon>Staphylococcus</taxon>
    </lineage>
</organism>
<reference key="1">
    <citation type="journal article" date="2004" name="Proc. Natl. Acad. Sci. U.S.A.">
        <title>Complete genomes of two clinical Staphylococcus aureus strains: evidence for the rapid evolution of virulence and drug resistance.</title>
        <authorList>
            <person name="Holden M.T.G."/>
            <person name="Feil E.J."/>
            <person name="Lindsay J.A."/>
            <person name="Peacock S.J."/>
            <person name="Day N.P.J."/>
            <person name="Enright M.C."/>
            <person name="Foster T.J."/>
            <person name="Moore C.E."/>
            <person name="Hurst L."/>
            <person name="Atkin R."/>
            <person name="Barron A."/>
            <person name="Bason N."/>
            <person name="Bentley S.D."/>
            <person name="Chillingworth C."/>
            <person name="Chillingworth T."/>
            <person name="Churcher C."/>
            <person name="Clark L."/>
            <person name="Corton C."/>
            <person name="Cronin A."/>
            <person name="Doggett J."/>
            <person name="Dowd L."/>
            <person name="Feltwell T."/>
            <person name="Hance Z."/>
            <person name="Harris B."/>
            <person name="Hauser H."/>
            <person name="Holroyd S."/>
            <person name="Jagels K."/>
            <person name="James K.D."/>
            <person name="Lennard N."/>
            <person name="Line A."/>
            <person name="Mayes R."/>
            <person name="Moule S."/>
            <person name="Mungall K."/>
            <person name="Ormond D."/>
            <person name="Quail M.A."/>
            <person name="Rabbinowitsch E."/>
            <person name="Rutherford K.M."/>
            <person name="Sanders M."/>
            <person name="Sharp S."/>
            <person name="Simmonds M."/>
            <person name="Stevens K."/>
            <person name="Whitehead S."/>
            <person name="Barrell B.G."/>
            <person name="Spratt B.G."/>
            <person name="Parkhill J."/>
        </authorList>
    </citation>
    <scope>NUCLEOTIDE SEQUENCE [LARGE SCALE GENOMIC DNA]</scope>
    <source>
        <strain>MRSA252</strain>
    </source>
</reference>
<proteinExistence type="inferred from homology"/>
<feature type="chain" id="PRO_0000125224" description="Large ribosomal subunit protein uL22">
    <location>
        <begin position="1"/>
        <end position="117"/>
    </location>
</feature>
<name>RL22_STAAR</name>
<gene>
    <name evidence="1" type="primary">rplV</name>
    <name type="ordered locus">SAR2330</name>
</gene>
<comment type="function">
    <text evidence="1">This protein binds specifically to 23S rRNA; its binding is stimulated by other ribosomal proteins, e.g. L4, L17, and L20. It is important during the early stages of 50S assembly. It makes multiple contacts with different domains of the 23S rRNA in the assembled 50S subunit and ribosome (By similarity).</text>
</comment>
<comment type="function">
    <text evidence="1">The globular domain of the protein is located near the polypeptide exit tunnel on the outside of the subunit, while an extended beta-hairpin is found that lines the wall of the exit tunnel in the center of the 70S ribosome.</text>
</comment>
<comment type="subunit">
    <text evidence="1">Part of the 50S ribosomal subunit.</text>
</comment>
<comment type="similarity">
    <text evidence="1">Belongs to the universal ribosomal protein uL22 family.</text>
</comment>
<accession>Q6GEI8</accession>